<name>DHX58_HUMAN</name>
<evidence type="ECO:0000255" key="1"/>
<evidence type="ECO:0000255" key="2">
    <source>
        <dbReference type="PROSITE-ProRule" id="PRU00541"/>
    </source>
</evidence>
<evidence type="ECO:0000255" key="3">
    <source>
        <dbReference type="PROSITE-ProRule" id="PRU00542"/>
    </source>
</evidence>
<evidence type="ECO:0000255" key="4">
    <source>
        <dbReference type="PROSITE-ProRule" id="PRU01125"/>
    </source>
</evidence>
<evidence type="ECO:0000269" key="5">
    <source>
    </source>
</evidence>
<evidence type="ECO:0000269" key="6">
    <source>
    </source>
</evidence>
<evidence type="ECO:0000269" key="7">
    <source>
    </source>
</evidence>
<evidence type="ECO:0000269" key="8">
    <source>
    </source>
</evidence>
<evidence type="ECO:0000269" key="9">
    <source>
    </source>
</evidence>
<evidence type="ECO:0000269" key="10">
    <source>
    </source>
</evidence>
<evidence type="ECO:0000269" key="11">
    <source>
    </source>
</evidence>
<evidence type="ECO:0000269" key="12">
    <source>
    </source>
</evidence>
<evidence type="ECO:0000269" key="13">
    <source>
    </source>
</evidence>
<evidence type="ECO:0000269" key="14">
    <source>
    </source>
</evidence>
<evidence type="ECO:0000269" key="15">
    <source>
    </source>
</evidence>
<evidence type="ECO:0000269" key="16">
    <source>
    </source>
</evidence>
<evidence type="ECO:0000269" key="17">
    <source>
    </source>
</evidence>
<evidence type="ECO:0000269" key="18">
    <source>
    </source>
</evidence>
<evidence type="ECO:0000269" key="19">
    <source>
    </source>
</evidence>
<evidence type="ECO:0000305" key="20"/>
<evidence type="ECO:0000305" key="21">
    <source>
    </source>
</evidence>
<evidence type="ECO:0000312" key="22">
    <source>
        <dbReference type="HGNC" id="HGNC:29517"/>
    </source>
</evidence>
<evidence type="ECO:0007829" key="23">
    <source>
        <dbReference type="PDB" id="2RQA"/>
    </source>
</evidence>
<evidence type="ECO:0007829" key="24">
    <source>
        <dbReference type="PDB" id="2W4R"/>
    </source>
</evidence>
<evidence type="ECO:0007829" key="25">
    <source>
        <dbReference type="PDB" id="3EQT"/>
    </source>
</evidence>
<proteinExistence type="evidence at protein level"/>
<comment type="function">
    <text evidence="5 6 7 9 10 11 12 13 15 16 19">Acts as a regulator of RIGI and IFIH1/MDA5 mediated antiviral signaling. Cannot initiate antiviral signaling as it lacks the CARD domain required for activating MAVS/IPS1-dependent signaling events. Can have both negative and positive regulatory functions related to RIGI and IFIH1/MDA5 signaling and this role in regulating signaling may be complex and could probably depend on characteristics of the infecting virus or target cells, or both. Its inhibitory action on RIG-I signaling may involve the following mechanisms: competition with RIGI for binding to the viral RNA, binding to RIGI and inhibiting its dimerization and interaction with MAVS/IPS1, competing with IKBKE in its binding to MAVS/IPS1 thereby inhibiting activation of interferon regulatory factor 3 (IRF3). Its positive regulatory role may involve unwinding or stripping nucleoproteins of viral RNA thereby facilitating their recognition by RIGI and IFIH1/MDA5. Involved in the innate immune response to various RNA viruses and some DNA viruses such as poxviruses and coronavirus SARS-CoV-2, and also to the bacterial pathogen Listeria monocytogenes (PubMed:31256877). Can bind both ssRNA and dsRNA, with a higher affinity for dsRNA. Shows a preference to 5'-triphosphorylated RNA, although it can recognize RNA lacking a 5'-triphosphate.</text>
</comment>
<comment type="catalytic activity">
    <reaction evidence="11 14">
        <text>ATP + H2O = ADP + phosphate + H(+)</text>
        <dbReference type="Rhea" id="RHEA:13065"/>
        <dbReference type="ChEBI" id="CHEBI:15377"/>
        <dbReference type="ChEBI" id="CHEBI:15378"/>
        <dbReference type="ChEBI" id="CHEBI:30616"/>
        <dbReference type="ChEBI" id="CHEBI:43474"/>
        <dbReference type="ChEBI" id="CHEBI:456216"/>
        <dbReference type="EC" id="3.6.4.13"/>
    </reaction>
    <physiologicalReaction direction="left-to-right" evidence="21">
        <dbReference type="Rhea" id="RHEA:13066"/>
    </physiologicalReaction>
</comment>
<comment type="subunit">
    <text evidence="6 7 8 9 10 12 17 18">Monomer in the absence of dsRNA. Homodimer in the presence of dsRNA. Interacts with RIGI (via CARD domain), MAVS/IPS1 and DDX60. Found in a complex with RIGI and IFIH1/MDA5. Interacts with ANKRD17. Directly interacts with ATG5 and ATG12, either as ATG5 and ATG12 monomers or as ATG12-ATG5 conjugates (PubMed:17709747).</text>
</comment>
<comment type="subunit">
    <text evidence="14">(Microbial infection) Interacts (via helicase C-terminal domain) with non-structural protein V of paramyxoviruses including human parainfluenza 2 virus, human parainfluenza 5 virus, measles virus, mumps virus, hendra virus and nipah virus.</text>
</comment>
<comment type="interaction">
    <interactant intactId="EBI-744193">
        <id>Q96C10</id>
    </interactant>
    <interactant intactId="EBI-528269">
        <id>Q9UKV8</id>
        <label>AGO2</label>
    </interactant>
    <organismsDiffer>false</organismsDiffer>
    <experiments>2</experiments>
</comment>
<comment type="interaction">
    <interactant intactId="EBI-744193">
        <id>Q96C10</id>
    </interactant>
    <interactant intactId="EBI-1211456">
        <id>Q7L2E3</id>
        <label>DHX30</label>
    </interactant>
    <organismsDiffer>false</organismsDiffer>
    <experiments>2</experiments>
</comment>
<comment type="interaction">
    <interactant intactId="EBI-744193">
        <id>Q96C10</id>
    </interactant>
    <interactant intactId="EBI-395506">
        <id>Q9UPY3</id>
        <label>DICER1</label>
    </interactant>
    <organismsDiffer>false</organismsDiffer>
    <experiments>2</experiments>
</comment>
<comment type="interaction">
    <interactant intactId="EBI-744193">
        <id>Q96C10</id>
    </interactant>
    <interactant intactId="EBI-640775">
        <id>P19525</id>
        <label>EIF2AK2</label>
    </interactant>
    <organismsDiffer>false</organismsDiffer>
    <experiments>2</experiments>
</comment>
<comment type="interaction">
    <interactant intactId="EBI-744193">
        <id>Q96C10</id>
    </interactant>
    <interactant intactId="EBI-372243">
        <id>P56537</id>
        <label>EIF6</label>
    </interactant>
    <organismsDiffer>false</organismsDiffer>
    <experiments>2</experiments>
</comment>
<comment type="interaction">
    <interactant intactId="EBI-744193">
        <id>Q96C10</id>
    </interactant>
    <interactant intactId="EBI-2867186">
        <id>Q16666</id>
        <label>IFI16</label>
    </interactant>
    <organismsDiffer>false</organismsDiffer>
    <experiments>2</experiments>
</comment>
<comment type="interaction">
    <interactant intactId="EBI-744193">
        <id>Q96C10</id>
    </interactant>
    <interactant intactId="EBI-766011">
        <id>O15226</id>
        <label>NKRF</label>
    </interactant>
    <organismsDiffer>false</organismsDiffer>
    <experiments>2</experiments>
</comment>
<comment type="interaction">
    <interactant intactId="EBI-744193">
        <id>Q96C10</id>
    </interactant>
    <interactant intactId="EBI-722938">
        <id>Q9NUL3</id>
        <label>STAU2</label>
    </interactant>
    <organismsDiffer>false</organismsDiffer>
    <experiments>2</experiments>
</comment>
<comment type="interaction">
    <interactant intactId="EBI-744193">
        <id>Q96C10</id>
    </interactant>
    <interactant intactId="EBI-6148694">
        <id>P11207</id>
        <label>P/V</label>
    </interactant>
    <organismsDiffer>true</organismsDiffer>
    <experiments>2</experiments>
</comment>
<comment type="interaction">
    <interactant intactId="EBI-744193">
        <id>Q96C10</id>
    </interactant>
    <interactant intactId="EBI-6599165">
        <id>P30927</id>
        <label>P/V</label>
    </interactant>
    <organismsDiffer>true</organismsDiffer>
    <experiments>2</experiments>
</comment>
<comment type="interaction">
    <interactant intactId="EBI-744193">
        <id>Q96C10</id>
    </interactant>
    <interactant intactId="EBI-6598728">
        <id>Q9EMA9</id>
        <label>P/V</label>
    </interactant>
    <organismsDiffer>true</organismsDiffer>
    <experiments>2</experiments>
</comment>
<comment type="subcellular location">
    <subcellularLocation>
        <location evidence="13">Cytoplasm</location>
    </subcellularLocation>
</comment>
<comment type="tissue specificity">
    <text evidence="19">Expressed in testis, nerve and spleen. Also expressed in the brain.</text>
</comment>
<comment type="induction">
    <text>By interferon (IFN), virus infection, or intracellular dsRNA.</text>
</comment>
<comment type="domain">
    <text>The RLR CTR domain is capable of inhibiting dimerization and signaling of RIGI and also facilitates binding of dsRNA.</text>
</comment>
<comment type="similarity">
    <text evidence="20">Belongs to the helicase family. RLR subfamily.</text>
</comment>
<accession>Q96C10</accession>
<accession>Q9HAM6</accession>
<feature type="chain" id="PRO_0000102010" description="ATP-dependent RNA helicase DHX58">
    <location>
        <begin position="1"/>
        <end position="678"/>
    </location>
</feature>
<feature type="domain" description="Helicase ATP-binding" evidence="2">
    <location>
        <begin position="11"/>
        <end position="188"/>
    </location>
</feature>
<feature type="domain" description="Helicase C-terminal" evidence="3">
    <location>
        <begin position="350"/>
        <end position="514"/>
    </location>
</feature>
<feature type="domain" description="RLR CTR" evidence="4">
    <location>
        <begin position="539"/>
        <end position="669"/>
    </location>
</feature>
<feature type="region of interest" description="RNA-binding">
    <location>
        <begin position="572"/>
        <end position="655"/>
    </location>
</feature>
<feature type="coiled-coil region" evidence="1">
    <location>
        <begin position="489"/>
        <end position="546"/>
    </location>
</feature>
<feature type="short sequence motif" description="DECH box">
    <location>
        <begin position="131"/>
        <end position="134"/>
    </location>
</feature>
<feature type="binding site" evidence="2">
    <location>
        <begin position="24"/>
        <end position="31"/>
    </location>
    <ligand>
        <name>ATP</name>
        <dbReference type="ChEBI" id="CHEBI:30616"/>
    </ligand>
</feature>
<feature type="binding site" evidence="4">
    <location>
        <position position="556"/>
    </location>
    <ligand>
        <name>Zn(2+)</name>
        <dbReference type="ChEBI" id="CHEBI:29105"/>
    </ligand>
</feature>
<feature type="binding site" evidence="4">
    <location>
        <position position="559"/>
    </location>
    <ligand>
        <name>Zn(2+)</name>
        <dbReference type="ChEBI" id="CHEBI:29105"/>
    </ligand>
</feature>
<feature type="binding site" evidence="4">
    <location>
        <position position="612"/>
    </location>
    <ligand>
        <name>Zn(2+)</name>
        <dbReference type="ChEBI" id="CHEBI:29105"/>
    </ligand>
</feature>
<feature type="binding site" evidence="4">
    <location>
        <position position="615"/>
    </location>
    <ligand>
        <name>Zn(2+)</name>
        <dbReference type="ChEBI" id="CHEBI:29105"/>
    </ligand>
</feature>
<feature type="sequence variant" id="VAR_083645" description="Found in a patient with a neurodevelopmental disorder; uncertain significance; dbSNP:rs200502586." evidence="19">
    <original>W</original>
    <variation>C</variation>
    <location>
        <position position="8"/>
    </location>
</feature>
<feature type="sequence variant" id="VAR_049336" description="In dbSNP:rs34891485.">
    <original>T</original>
    <variation>A</variation>
    <location>
        <position position="76"/>
    </location>
</feature>
<feature type="sequence variant" id="VAR_049337" description="In dbSNP:rs35118457.">
    <original>R</original>
    <variation>Q</variation>
    <location>
        <position position="95"/>
    </location>
</feature>
<feature type="sequence variant" id="VAR_019394" description="In dbSNP:rs2074158.">
    <original>Q</original>
    <variation>R</variation>
    <location>
        <position position="425"/>
    </location>
</feature>
<feature type="sequence variant" id="VAR_019395" description="In dbSNP:rs2074160.">
    <original>R</original>
    <variation>Q</variation>
    <location>
        <position position="523"/>
    </location>
</feature>
<feature type="mutagenesis site" description="Loss of dsRNA-induced ATPase activity. No effect on ds-RNA binding. No effect on cytoplasmic pattern recognition receptor signaling pathway in response to virus." evidence="11">
    <original>K</original>
    <variation>A</variation>
    <location>
        <position position="30"/>
    </location>
</feature>
<feature type="mutagenesis site" description="Loss of dsRNA-induced ATPase activity." evidence="11">
    <original>DECH</original>
    <variation>AACA</variation>
    <location>
        <begin position="131"/>
        <end position="134"/>
    </location>
</feature>
<feature type="mutagenesis site" description="Loss of dsRNA-induced ATPase activity. Loss of ds-RNA binding. No effect on cytoplasmic pattern recognition receptor signaling pathway in response to virus." evidence="11">
    <original>TAS</original>
    <variation>AAA</variation>
    <location>
        <begin position="167"/>
        <end position="169"/>
    </location>
</feature>
<feature type="mutagenesis site" description="Loss of dsRNA-induced ATPase activity. No effect on cytoplasmic pattern recognition receptor signaling pathway in response to virus." evidence="11">
    <original>FTRT</original>
    <variation>ATRA</variation>
    <location>
        <begin position="373"/>
        <end position="376"/>
    </location>
</feature>
<feature type="mutagenesis site" description="Loss of dsRNA-induced ATPase activity. No effect on cytoplasmic pattern recognition receptor signaling pathway in response to virus." evidence="11">
    <original>TSVAE</original>
    <variation>ASVAA</variation>
    <location>
        <begin position="438"/>
        <end position="442"/>
    </location>
</feature>
<feature type="mutagenesis site" description="Loss of dsRNA-induced ATPase activity. No effect on cytoplasmic pattern recognition receptor signaling pathway in response to virus." evidence="11">
    <original>QARGR</original>
    <variation>AARGA</variation>
    <location>
        <begin position="467"/>
        <end position="471"/>
    </location>
</feature>
<feature type="mutagenesis site" description="Abolishes RNA binding." evidence="10 12">
    <original>K</original>
    <variation>E</variation>
    <location>
        <position position="634"/>
    </location>
</feature>
<feature type="mutagenesis site" description="Abolishes RNA binding." evidence="12">
    <original>K</original>
    <variation>E</variation>
    <location>
        <position position="651"/>
    </location>
</feature>
<feature type="sequence conflict" description="In Ref. 1; BAB13818." evidence="20" ref="1">
    <original>R</original>
    <variation>W</variation>
    <location>
        <position position="473"/>
    </location>
</feature>
<feature type="helix" evidence="25">
    <location>
        <begin position="549"/>
        <end position="551"/>
    </location>
</feature>
<feature type="strand" evidence="25">
    <location>
        <begin position="553"/>
        <end position="556"/>
    </location>
</feature>
<feature type="turn" evidence="25">
    <location>
        <begin position="557"/>
        <end position="559"/>
    </location>
</feature>
<feature type="strand" evidence="25">
    <location>
        <begin position="562"/>
        <end position="565"/>
    </location>
</feature>
<feature type="helix" evidence="25">
    <location>
        <begin position="566"/>
        <end position="568"/>
    </location>
</feature>
<feature type="strand" evidence="25">
    <location>
        <begin position="569"/>
        <end position="572"/>
    </location>
</feature>
<feature type="turn" evidence="25">
    <location>
        <begin position="573"/>
        <end position="575"/>
    </location>
</feature>
<feature type="strand" evidence="25">
    <location>
        <begin position="576"/>
        <end position="579"/>
    </location>
</feature>
<feature type="helix" evidence="25">
    <location>
        <begin position="582"/>
        <end position="587"/>
    </location>
</feature>
<feature type="strand" evidence="25">
    <location>
        <begin position="588"/>
        <end position="590"/>
    </location>
</feature>
<feature type="strand" evidence="23">
    <location>
        <begin position="592"/>
        <end position="594"/>
    </location>
</feature>
<feature type="strand" evidence="23">
    <location>
        <begin position="597"/>
        <end position="599"/>
    </location>
</feature>
<feature type="strand" evidence="25">
    <location>
        <begin position="602"/>
        <end position="612"/>
    </location>
</feature>
<feature type="turn" evidence="25">
    <location>
        <begin position="613"/>
        <end position="615"/>
    </location>
</feature>
<feature type="strand" evidence="25">
    <location>
        <begin position="618"/>
        <end position="625"/>
    </location>
</feature>
<feature type="strand" evidence="25">
    <location>
        <begin position="628"/>
        <end position="633"/>
    </location>
</feature>
<feature type="helix" evidence="25">
    <location>
        <begin position="635"/>
        <end position="637"/>
    </location>
</feature>
<feature type="strand" evidence="25">
    <location>
        <begin position="638"/>
        <end position="642"/>
    </location>
</feature>
<feature type="strand" evidence="25">
    <location>
        <begin position="645"/>
        <end position="647"/>
    </location>
</feature>
<feature type="helix" evidence="25">
    <location>
        <begin position="652"/>
        <end position="654"/>
    </location>
</feature>
<feature type="strand" evidence="24">
    <location>
        <begin position="655"/>
        <end position="657"/>
    </location>
</feature>
<feature type="helix" evidence="25">
    <location>
        <begin position="664"/>
        <end position="671"/>
    </location>
</feature>
<feature type="helix" evidence="25">
    <location>
        <begin position="675"/>
        <end position="677"/>
    </location>
</feature>
<organism>
    <name type="scientific">Homo sapiens</name>
    <name type="common">Human</name>
    <dbReference type="NCBI Taxonomy" id="9606"/>
    <lineage>
        <taxon>Eukaryota</taxon>
        <taxon>Metazoa</taxon>
        <taxon>Chordata</taxon>
        <taxon>Craniata</taxon>
        <taxon>Vertebrata</taxon>
        <taxon>Euteleostomi</taxon>
        <taxon>Mammalia</taxon>
        <taxon>Eutheria</taxon>
        <taxon>Euarchontoglires</taxon>
        <taxon>Primates</taxon>
        <taxon>Haplorrhini</taxon>
        <taxon>Catarrhini</taxon>
        <taxon>Hominidae</taxon>
        <taxon>Homo</taxon>
    </lineage>
</organism>
<sequence length="678" mass="76613">MELRSYQWEVIMPALEGKNIIIWLPTGAGKTRAAAYVAKRHLETVDGAKVVVLVNRVHLVTQHGEEFRRMLDGRWTVTTLSGDMGPRAGFGHLARCHDLLICTAELLQMALTSPEEEEHVELTVFSLIVVDECHHTHKDTVYNVIMSQYLELKLQRAQPLPQVLGLTASPGTGGASKLDGAINHVLQLCANLDTWCIMSPQNCCPQLQEHSQQPCKQYNLCHRRSQDPFGDLLKKLMDQIHDHLEMPELSRKFGTQMYEQQVVKLSEAAALAGLQEQRVYALHLRRYNDALLIHDTVRAVDALAALQDFYHREHVTKTQILCAERRLLALFDDRKNELAHLATHGPENPKLEMLEKILQRQFSSSNSPRGIIFTRTRQSAHSLLLWLQQQQGLQTVDIRAQLLIGAGNSSQSTHMTQRDQQEVIQKFQDGTLNLLVATSVAEEGLDIPHCNVVVRYGLLTNEISMVQARGRARADQSVYAFVATEGSRELKRELINEALETLMEQAVAAVQKMDQAEYQAKIRDLQQAALTKRAAQAAQRENQRQQFPVEHVQLLCINCMVAVGHGSDLRKVEGTHHVNVNPNFSNYYNVSRDPVVINKVFKDWKPGGVISCRNCGEVWGLQMIYKSVKLPVLKVRSMLLETPQGRIQAKKWSRVPFSVPDFDFLQHCAENLSDLSLD</sequence>
<dbReference type="EC" id="3.6.4.13" evidence="11 14"/>
<dbReference type="EMBL" id="AK021416">
    <property type="protein sequence ID" value="BAB13818.1"/>
    <property type="molecule type" value="mRNA"/>
</dbReference>
<dbReference type="EMBL" id="BC014949">
    <property type="protein sequence ID" value="AAH14949.1"/>
    <property type="molecule type" value="mRNA"/>
</dbReference>
<dbReference type="CCDS" id="CCDS11416.1"/>
<dbReference type="RefSeq" id="NP_077024.2">
    <property type="nucleotide sequence ID" value="NM_024119.3"/>
</dbReference>
<dbReference type="RefSeq" id="XP_016880548.1">
    <property type="nucleotide sequence ID" value="XM_017025059.1"/>
</dbReference>
<dbReference type="RefSeq" id="XP_016880549.1">
    <property type="nucleotide sequence ID" value="XM_017025060.1"/>
</dbReference>
<dbReference type="RefSeq" id="XP_047292680.1">
    <property type="nucleotide sequence ID" value="XM_047436724.1"/>
</dbReference>
<dbReference type="RefSeq" id="XP_047292681.1">
    <property type="nucleotide sequence ID" value="XM_047436725.1"/>
</dbReference>
<dbReference type="RefSeq" id="XP_054173139.1">
    <property type="nucleotide sequence ID" value="XM_054317164.1"/>
</dbReference>
<dbReference type="RefSeq" id="XP_054173140.1">
    <property type="nucleotide sequence ID" value="XM_054317165.1"/>
</dbReference>
<dbReference type="PDB" id="2RQA">
    <property type="method" value="NMR"/>
    <property type="chains" value="A=546-678"/>
</dbReference>
<dbReference type="PDB" id="2W4R">
    <property type="method" value="X-ray"/>
    <property type="resolution" value="2.60 A"/>
    <property type="chains" value="A/B/C/D=537-678"/>
</dbReference>
<dbReference type="PDB" id="3EQT">
    <property type="method" value="X-ray"/>
    <property type="resolution" value="2.00 A"/>
    <property type="chains" value="A/B=541-678"/>
</dbReference>
<dbReference type="PDBsum" id="2RQA"/>
<dbReference type="PDBsum" id="2W4R"/>
<dbReference type="PDBsum" id="3EQT"/>
<dbReference type="SMR" id="Q96C10"/>
<dbReference type="BioGRID" id="122553">
    <property type="interactions" value="28"/>
</dbReference>
<dbReference type="DIP" id="DIP-60792N"/>
<dbReference type="FunCoup" id="Q96C10">
    <property type="interactions" value="441"/>
</dbReference>
<dbReference type="IntAct" id="Q96C10">
    <property type="interactions" value="21"/>
</dbReference>
<dbReference type="STRING" id="9606.ENSP00000251642"/>
<dbReference type="iPTMnet" id="Q96C10"/>
<dbReference type="PhosphoSitePlus" id="Q96C10"/>
<dbReference type="SwissPalm" id="Q96C10"/>
<dbReference type="BioMuta" id="DHX58"/>
<dbReference type="DMDM" id="50401123"/>
<dbReference type="jPOST" id="Q96C10"/>
<dbReference type="MassIVE" id="Q96C10"/>
<dbReference type="PaxDb" id="9606-ENSP00000251642"/>
<dbReference type="PeptideAtlas" id="Q96C10"/>
<dbReference type="ProteomicsDB" id="76141"/>
<dbReference type="TopDownProteomics" id="Q96C10"/>
<dbReference type="Antibodypedia" id="16840">
    <property type="antibodies" value="373 antibodies from 35 providers"/>
</dbReference>
<dbReference type="DNASU" id="79132"/>
<dbReference type="Ensembl" id="ENST00000251642.8">
    <property type="protein sequence ID" value="ENSP00000251642.3"/>
    <property type="gene ID" value="ENSG00000108771.13"/>
</dbReference>
<dbReference type="GeneID" id="79132"/>
<dbReference type="KEGG" id="hsa:79132"/>
<dbReference type="MANE-Select" id="ENST00000251642.8">
    <property type="protein sequence ID" value="ENSP00000251642.3"/>
    <property type="RefSeq nucleotide sequence ID" value="NM_024119.3"/>
    <property type="RefSeq protein sequence ID" value="NP_077024.2"/>
</dbReference>
<dbReference type="UCSC" id="uc002hyw.5">
    <property type="organism name" value="human"/>
</dbReference>
<dbReference type="AGR" id="HGNC:29517"/>
<dbReference type="CTD" id="79132"/>
<dbReference type="DisGeNET" id="79132"/>
<dbReference type="GeneCards" id="DHX58"/>
<dbReference type="HGNC" id="HGNC:29517">
    <property type="gene designation" value="DHX58"/>
</dbReference>
<dbReference type="HPA" id="ENSG00000108771">
    <property type="expression patterns" value="Low tissue specificity"/>
</dbReference>
<dbReference type="MIM" id="608588">
    <property type="type" value="gene"/>
</dbReference>
<dbReference type="neXtProt" id="NX_Q96C10"/>
<dbReference type="OpenTargets" id="ENSG00000108771"/>
<dbReference type="PharmGKB" id="PA162383566"/>
<dbReference type="VEuPathDB" id="HostDB:ENSG00000108771"/>
<dbReference type="eggNOG" id="KOG0354">
    <property type="taxonomic scope" value="Eukaryota"/>
</dbReference>
<dbReference type="GeneTree" id="ENSGT00940000153173"/>
<dbReference type="HOGENOM" id="CLU_006888_2_1_1"/>
<dbReference type="InParanoid" id="Q96C10"/>
<dbReference type="OMA" id="IFYEPVP"/>
<dbReference type="OrthoDB" id="416741at2759"/>
<dbReference type="PAN-GO" id="Q96C10">
    <property type="GO annotations" value="7 GO annotations based on evolutionary models"/>
</dbReference>
<dbReference type="PhylomeDB" id="Q96C10"/>
<dbReference type="TreeFam" id="TF330258"/>
<dbReference type="PathwayCommons" id="Q96C10"/>
<dbReference type="Reactome" id="R-HSA-168928">
    <property type="pathway name" value="DDX58/IFIH1-mediated induction of interferon-alpha/beta"/>
</dbReference>
<dbReference type="SignaLink" id="Q96C10"/>
<dbReference type="BioGRID-ORCS" id="79132">
    <property type="hits" value="12 hits in 1148 CRISPR screens"/>
</dbReference>
<dbReference type="CD-CODE" id="DEE660B4">
    <property type="entry name" value="Stress granule"/>
</dbReference>
<dbReference type="ChiTaRS" id="DHX58">
    <property type="organism name" value="human"/>
</dbReference>
<dbReference type="EvolutionaryTrace" id="Q96C10"/>
<dbReference type="GeneWiki" id="LGP2"/>
<dbReference type="GenomeRNAi" id="79132"/>
<dbReference type="Pharos" id="Q96C10">
    <property type="development level" value="Tbio"/>
</dbReference>
<dbReference type="PRO" id="PR:Q96C10"/>
<dbReference type="Proteomes" id="UP000005640">
    <property type="component" value="Chromosome 17"/>
</dbReference>
<dbReference type="RNAct" id="Q96C10">
    <property type="molecule type" value="protein"/>
</dbReference>
<dbReference type="Bgee" id="ENSG00000108771">
    <property type="expression patterns" value="Expressed in granulocyte and 99 other cell types or tissues"/>
</dbReference>
<dbReference type="ExpressionAtlas" id="Q96C10">
    <property type="expression patterns" value="baseline and differential"/>
</dbReference>
<dbReference type="GO" id="GO:0005737">
    <property type="term" value="C:cytoplasm"/>
    <property type="evidence" value="ECO:0000318"/>
    <property type="project" value="GO_Central"/>
</dbReference>
<dbReference type="GO" id="GO:0005524">
    <property type="term" value="F:ATP binding"/>
    <property type="evidence" value="ECO:0007669"/>
    <property type="project" value="UniProtKB-KW"/>
</dbReference>
<dbReference type="GO" id="GO:0016887">
    <property type="term" value="F:ATP hydrolysis activity"/>
    <property type="evidence" value="ECO:0000315"/>
    <property type="project" value="UniProtKB"/>
</dbReference>
<dbReference type="GO" id="GO:0003677">
    <property type="term" value="F:DNA binding"/>
    <property type="evidence" value="ECO:0007669"/>
    <property type="project" value="InterPro"/>
</dbReference>
<dbReference type="GO" id="GO:0003725">
    <property type="term" value="F:double-stranded RNA binding"/>
    <property type="evidence" value="ECO:0000314"/>
    <property type="project" value="UniProtKB"/>
</dbReference>
<dbReference type="GO" id="GO:0003724">
    <property type="term" value="F:RNA helicase activity"/>
    <property type="evidence" value="ECO:0000315"/>
    <property type="project" value="UniProtKB"/>
</dbReference>
<dbReference type="GO" id="GO:0003727">
    <property type="term" value="F:single-stranded RNA binding"/>
    <property type="evidence" value="ECO:0000314"/>
    <property type="project" value="UniProtKB"/>
</dbReference>
<dbReference type="GO" id="GO:0008270">
    <property type="term" value="F:zinc ion binding"/>
    <property type="evidence" value="ECO:0000314"/>
    <property type="project" value="UniProtKB"/>
</dbReference>
<dbReference type="GO" id="GO:0140374">
    <property type="term" value="P:antiviral innate immune response"/>
    <property type="evidence" value="ECO:0000318"/>
    <property type="project" value="GO_Central"/>
</dbReference>
<dbReference type="GO" id="GO:0002753">
    <property type="term" value="P:cytoplasmic pattern recognition receptor signaling pathway"/>
    <property type="evidence" value="ECO:0000315"/>
    <property type="project" value="UniProtKB"/>
</dbReference>
<dbReference type="GO" id="GO:0045824">
    <property type="term" value="P:negative regulation of innate immune response"/>
    <property type="evidence" value="ECO:0000314"/>
    <property type="project" value="UniProtKB"/>
</dbReference>
<dbReference type="GO" id="GO:0039534">
    <property type="term" value="P:negative regulation of MDA-5 signaling pathway"/>
    <property type="evidence" value="ECO:0000315"/>
    <property type="project" value="UniProtKB"/>
</dbReference>
<dbReference type="GO" id="GO:0039536">
    <property type="term" value="P:negative regulation of RIG-I signaling pathway"/>
    <property type="evidence" value="ECO:0000314"/>
    <property type="project" value="UniProtKB"/>
</dbReference>
<dbReference type="GO" id="GO:0032480">
    <property type="term" value="P:negative regulation of type I interferon production"/>
    <property type="evidence" value="ECO:0000314"/>
    <property type="project" value="UniProtKB"/>
</dbReference>
<dbReference type="GO" id="GO:1900245">
    <property type="term" value="P:positive regulation of MDA-5 signaling pathway"/>
    <property type="evidence" value="ECO:0000250"/>
    <property type="project" value="UniProtKB"/>
</dbReference>
<dbReference type="GO" id="GO:1900246">
    <property type="term" value="P:positive regulation of RIG-I signaling pathway"/>
    <property type="evidence" value="ECO:0000250"/>
    <property type="project" value="UniProtKB"/>
</dbReference>
<dbReference type="GO" id="GO:0032481">
    <property type="term" value="P:positive regulation of type I interferon production"/>
    <property type="evidence" value="ECO:0000250"/>
    <property type="project" value="UniProtKB"/>
</dbReference>
<dbReference type="GO" id="GO:0045088">
    <property type="term" value="P:regulation of innate immune response"/>
    <property type="evidence" value="ECO:0000314"/>
    <property type="project" value="UniProtKB"/>
</dbReference>
<dbReference type="GO" id="GO:0009617">
    <property type="term" value="P:response to bacterium"/>
    <property type="evidence" value="ECO:0007669"/>
    <property type="project" value="Ensembl"/>
</dbReference>
<dbReference type="GO" id="GO:0009615">
    <property type="term" value="P:response to virus"/>
    <property type="evidence" value="ECO:0000250"/>
    <property type="project" value="UniProtKB"/>
</dbReference>
<dbReference type="CDD" id="cd18075">
    <property type="entry name" value="DEXHc_RLR-3"/>
    <property type="match status" value="1"/>
</dbReference>
<dbReference type="CDD" id="cd15806">
    <property type="entry name" value="LGP2_C"/>
    <property type="match status" value="1"/>
</dbReference>
<dbReference type="CDD" id="cd12090">
    <property type="entry name" value="MDA5_ID"/>
    <property type="match status" value="1"/>
</dbReference>
<dbReference type="CDD" id="cd18802">
    <property type="entry name" value="SF2_C_dicer"/>
    <property type="match status" value="1"/>
</dbReference>
<dbReference type="FunFam" id="1.20.1320.30:FF:000003">
    <property type="entry name" value="Probable ATP-dependent RNA helicase DHX58"/>
    <property type="match status" value="1"/>
</dbReference>
<dbReference type="FunFam" id="2.170.150.30:FF:000003">
    <property type="entry name" value="Probable ATP-dependent RNA helicase DHX58"/>
    <property type="match status" value="1"/>
</dbReference>
<dbReference type="Gene3D" id="1.20.1320.30">
    <property type="match status" value="1"/>
</dbReference>
<dbReference type="Gene3D" id="3.40.50.300">
    <property type="entry name" value="P-loop containing nucleotide triphosphate hydrolases"/>
    <property type="match status" value="2"/>
</dbReference>
<dbReference type="Gene3D" id="2.170.150.30">
    <property type="entry name" value="RIG-I-like receptor, C-terminal regulatory domain"/>
    <property type="match status" value="1"/>
</dbReference>
<dbReference type="InterPro" id="IPR006935">
    <property type="entry name" value="Helicase/UvrB_N"/>
</dbReference>
<dbReference type="InterPro" id="IPR014001">
    <property type="entry name" value="Helicase_ATP-bd"/>
</dbReference>
<dbReference type="InterPro" id="IPR001650">
    <property type="entry name" value="Helicase_C-like"/>
</dbReference>
<dbReference type="InterPro" id="IPR027417">
    <property type="entry name" value="P-loop_NTPase"/>
</dbReference>
<dbReference type="InterPro" id="IPR041204">
    <property type="entry name" value="RIG-I-like_C"/>
</dbReference>
<dbReference type="InterPro" id="IPR038557">
    <property type="entry name" value="RLR_C_sf"/>
</dbReference>
<dbReference type="InterPro" id="IPR021673">
    <property type="entry name" value="RLR_CTR"/>
</dbReference>
<dbReference type="InterPro" id="IPR051363">
    <property type="entry name" value="RLR_Helicase"/>
</dbReference>
<dbReference type="PANTHER" id="PTHR14074:SF7">
    <property type="entry name" value="ATP-DEPENDENT RNA HELICASE DHX58"/>
    <property type="match status" value="1"/>
</dbReference>
<dbReference type="PANTHER" id="PTHR14074">
    <property type="entry name" value="HELICASE WITH DEATH DOMAIN-RELATED"/>
    <property type="match status" value="1"/>
</dbReference>
<dbReference type="Pfam" id="PF00271">
    <property type="entry name" value="Helicase_C"/>
    <property type="match status" value="1"/>
</dbReference>
<dbReference type="Pfam" id="PF04851">
    <property type="entry name" value="ResIII"/>
    <property type="match status" value="1"/>
</dbReference>
<dbReference type="Pfam" id="PF18119">
    <property type="entry name" value="RIG-I_C"/>
    <property type="match status" value="1"/>
</dbReference>
<dbReference type="Pfam" id="PF11648">
    <property type="entry name" value="RIG-I_C-RD"/>
    <property type="match status" value="1"/>
</dbReference>
<dbReference type="SMART" id="SM00487">
    <property type="entry name" value="DEXDc"/>
    <property type="match status" value="1"/>
</dbReference>
<dbReference type="SMART" id="SM00490">
    <property type="entry name" value="HELICc"/>
    <property type="match status" value="1"/>
</dbReference>
<dbReference type="SUPFAM" id="SSF52540">
    <property type="entry name" value="P-loop containing nucleoside triphosphate hydrolases"/>
    <property type="match status" value="1"/>
</dbReference>
<dbReference type="PROSITE" id="PS51192">
    <property type="entry name" value="HELICASE_ATP_BIND_1"/>
    <property type="match status" value="1"/>
</dbReference>
<dbReference type="PROSITE" id="PS51194">
    <property type="entry name" value="HELICASE_CTER"/>
    <property type="match status" value="1"/>
</dbReference>
<dbReference type="PROSITE" id="PS51789">
    <property type="entry name" value="RLR_CTR"/>
    <property type="match status" value="1"/>
</dbReference>
<protein>
    <recommendedName>
        <fullName evidence="21">ATP-dependent RNA helicase DHX58</fullName>
        <ecNumber evidence="11 14">3.6.4.13</ecNumber>
    </recommendedName>
    <alternativeName>
        <fullName evidence="21">ATP-dependent helicase LGP2</fullName>
    </alternativeName>
    <alternativeName>
        <fullName>Protein D11Lgp2 homolog</fullName>
    </alternativeName>
    <alternativeName>
        <fullName>RIG-I-like receptor 3</fullName>
        <shortName>RLR-3</shortName>
    </alternativeName>
    <alternativeName>
        <fullName>RIG-I-like receptor LGP2</fullName>
        <shortName>RLR</shortName>
    </alternativeName>
</protein>
<reference key="1">
    <citation type="journal article" date="2004" name="Nat. Genet.">
        <title>Complete sequencing and characterization of 21,243 full-length human cDNAs.</title>
        <authorList>
            <person name="Ota T."/>
            <person name="Suzuki Y."/>
            <person name="Nishikawa T."/>
            <person name="Otsuki T."/>
            <person name="Sugiyama T."/>
            <person name="Irie R."/>
            <person name="Wakamatsu A."/>
            <person name="Hayashi K."/>
            <person name="Sato H."/>
            <person name="Nagai K."/>
            <person name="Kimura K."/>
            <person name="Makita H."/>
            <person name="Sekine M."/>
            <person name="Obayashi M."/>
            <person name="Nishi T."/>
            <person name="Shibahara T."/>
            <person name="Tanaka T."/>
            <person name="Ishii S."/>
            <person name="Yamamoto J."/>
            <person name="Saito K."/>
            <person name="Kawai Y."/>
            <person name="Isono Y."/>
            <person name="Nakamura Y."/>
            <person name="Nagahari K."/>
            <person name="Murakami K."/>
            <person name="Yasuda T."/>
            <person name="Iwayanagi T."/>
            <person name="Wagatsuma M."/>
            <person name="Shiratori A."/>
            <person name="Sudo H."/>
            <person name="Hosoiri T."/>
            <person name="Kaku Y."/>
            <person name="Kodaira H."/>
            <person name="Kondo H."/>
            <person name="Sugawara M."/>
            <person name="Takahashi M."/>
            <person name="Kanda K."/>
            <person name="Yokoi T."/>
            <person name="Furuya T."/>
            <person name="Kikkawa E."/>
            <person name="Omura Y."/>
            <person name="Abe K."/>
            <person name="Kamihara K."/>
            <person name="Katsuta N."/>
            <person name="Sato K."/>
            <person name="Tanikawa M."/>
            <person name="Yamazaki M."/>
            <person name="Ninomiya K."/>
            <person name="Ishibashi T."/>
            <person name="Yamashita H."/>
            <person name="Murakawa K."/>
            <person name="Fujimori K."/>
            <person name="Tanai H."/>
            <person name="Kimata M."/>
            <person name="Watanabe M."/>
            <person name="Hiraoka S."/>
            <person name="Chiba Y."/>
            <person name="Ishida S."/>
            <person name="Ono Y."/>
            <person name="Takiguchi S."/>
            <person name="Watanabe S."/>
            <person name="Yosida M."/>
            <person name="Hotuta T."/>
            <person name="Kusano J."/>
            <person name="Kanehori K."/>
            <person name="Takahashi-Fujii A."/>
            <person name="Hara H."/>
            <person name="Tanase T.-O."/>
            <person name="Nomura Y."/>
            <person name="Togiya S."/>
            <person name="Komai F."/>
            <person name="Hara R."/>
            <person name="Takeuchi K."/>
            <person name="Arita M."/>
            <person name="Imose N."/>
            <person name="Musashino K."/>
            <person name="Yuuki H."/>
            <person name="Oshima A."/>
            <person name="Sasaki N."/>
            <person name="Aotsuka S."/>
            <person name="Yoshikawa Y."/>
            <person name="Matsunawa H."/>
            <person name="Ichihara T."/>
            <person name="Shiohata N."/>
            <person name="Sano S."/>
            <person name="Moriya S."/>
            <person name="Momiyama H."/>
            <person name="Satoh N."/>
            <person name="Takami S."/>
            <person name="Terashima Y."/>
            <person name="Suzuki O."/>
            <person name="Nakagawa S."/>
            <person name="Senoh A."/>
            <person name="Mizoguchi H."/>
            <person name="Goto Y."/>
            <person name="Shimizu F."/>
            <person name="Wakebe H."/>
            <person name="Hishigaki H."/>
            <person name="Watanabe T."/>
            <person name="Sugiyama A."/>
            <person name="Takemoto M."/>
            <person name="Kawakami B."/>
            <person name="Yamazaki M."/>
            <person name="Watanabe K."/>
            <person name="Kumagai A."/>
            <person name="Itakura S."/>
            <person name="Fukuzumi Y."/>
            <person name="Fujimori Y."/>
            <person name="Komiyama M."/>
            <person name="Tashiro H."/>
            <person name="Tanigami A."/>
            <person name="Fujiwara T."/>
            <person name="Ono T."/>
            <person name="Yamada K."/>
            <person name="Fujii Y."/>
            <person name="Ozaki K."/>
            <person name="Hirao M."/>
            <person name="Ohmori Y."/>
            <person name="Kawabata A."/>
            <person name="Hikiji T."/>
            <person name="Kobatake N."/>
            <person name="Inagaki H."/>
            <person name="Ikema Y."/>
            <person name="Okamoto S."/>
            <person name="Okitani R."/>
            <person name="Kawakami T."/>
            <person name="Noguchi S."/>
            <person name="Itoh T."/>
            <person name="Shigeta K."/>
            <person name="Senba T."/>
            <person name="Matsumura K."/>
            <person name="Nakajima Y."/>
            <person name="Mizuno T."/>
            <person name="Morinaga M."/>
            <person name="Sasaki M."/>
            <person name="Togashi T."/>
            <person name="Oyama M."/>
            <person name="Hata H."/>
            <person name="Watanabe M."/>
            <person name="Komatsu T."/>
            <person name="Mizushima-Sugano J."/>
            <person name="Satoh T."/>
            <person name="Shirai Y."/>
            <person name="Takahashi Y."/>
            <person name="Nakagawa K."/>
            <person name="Okumura K."/>
            <person name="Nagase T."/>
            <person name="Nomura N."/>
            <person name="Kikuchi H."/>
            <person name="Masuho Y."/>
            <person name="Yamashita R."/>
            <person name="Nakai K."/>
            <person name="Yada T."/>
            <person name="Nakamura Y."/>
            <person name="Ohara O."/>
            <person name="Isogai T."/>
            <person name="Sugano S."/>
        </authorList>
    </citation>
    <scope>NUCLEOTIDE SEQUENCE [LARGE SCALE MRNA]</scope>
    <source>
        <tissue>Embryo</tissue>
    </source>
</reference>
<reference key="2">
    <citation type="journal article" date="2004" name="Genome Res.">
        <title>The status, quality, and expansion of the NIH full-length cDNA project: the Mammalian Gene Collection (MGC).</title>
        <authorList>
            <consortium name="The MGC Project Team"/>
        </authorList>
    </citation>
    <scope>NUCLEOTIDE SEQUENCE [LARGE SCALE MRNA]</scope>
    <source>
        <tissue>Colon</tissue>
    </source>
</reference>
<reference key="3">
    <citation type="journal article" date="2005" name="J. Immunol.">
        <title>Shared and unique functions of the DExD/H-box helicases RIG-I, MDA5, and LGP2 in antiviral innate immunity.</title>
        <authorList>
            <person name="Yoneyama M."/>
            <person name="Kikuchi M."/>
            <person name="Matsumoto K."/>
            <person name="Imaizumi T."/>
            <person name="Miyagishi M."/>
            <person name="Taira K."/>
            <person name="Foy E."/>
            <person name="Loo Y.-M."/>
            <person name="Gale M. Jr."/>
            <person name="Akira S."/>
            <person name="Yonehara S."/>
            <person name="Kato A."/>
            <person name="Fujita T."/>
        </authorList>
    </citation>
    <scope>FUNCTION</scope>
</reference>
<reference key="4">
    <citation type="journal article" date="2006" name="J. Virol.">
        <title>RNA- and virus-independent inhibition of antiviral signaling by RNA helicase LGP2.</title>
        <authorList>
            <person name="Komuro A."/>
            <person name="Horvath C.M."/>
        </authorList>
    </citation>
    <scope>FUNCTION</scope>
    <scope>INTERACTION WITH MAVS AND RIGI</scope>
</reference>
<reference key="5">
    <citation type="journal article" date="2007" name="Proc. Natl. Acad. Sci. U.S.A.">
        <title>Regulation of innate antiviral defenses through a shared repressor domain in RIG-I and LGP2.</title>
        <authorList>
            <person name="Saito T."/>
            <person name="Hirai R."/>
            <person name="Loo Y.-M."/>
            <person name="Owen D."/>
            <person name="Johnson C.L."/>
            <person name="Sinha S.C."/>
            <person name="Akira S."/>
            <person name="Fujita T."/>
            <person name="Gale M. Jr."/>
        </authorList>
    </citation>
    <scope>FUNCTION</scope>
    <scope>INTERACTION WITH RIGI</scope>
</reference>
<reference key="6">
    <citation type="journal article" date="2007" name="Proc. Natl. Acad. Sci. U.S.A.">
        <title>The Atg5-Atg12 conjugate associates with innate antiviral immune responses.</title>
        <authorList>
            <person name="Jounai N."/>
            <person name="Takeshita F."/>
            <person name="Kobiyama K."/>
            <person name="Sawano A."/>
            <person name="Miyawaki A."/>
            <person name="Xin K.Q."/>
            <person name="Ishii K.J."/>
            <person name="Kawai T."/>
            <person name="Akira S."/>
            <person name="Suzuki K."/>
            <person name="Okuda K."/>
        </authorList>
    </citation>
    <scope>INTERACTION WITH ATG5 AND ATG12</scope>
</reference>
<reference key="7">
    <citation type="journal article" date="2007" name="Sci. STKE">
        <title>Regulation of interferon production by RIG-I and LGP2: a lesson in self-control.</title>
        <authorList>
            <person name="Vitour D."/>
            <person name="Meurs E.F."/>
        </authorList>
    </citation>
    <scope>REVIEW ON FUNCTION</scope>
</reference>
<reference key="8">
    <citation type="journal article" date="2008" name="J. Biol. Chem.">
        <title>Structure and function of LGP2, a DEX(D/H) helicase that regulates the innate immunity response.</title>
        <authorList>
            <person name="Murali A."/>
            <person name="Li X."/>
            <person name="Ranjith-Kumar C.T."/>
            <person name="Bhardwaj K."/>
            <person name="Holzenburg A."/>
            <person name="Li P."/>
            <person name="Kao C.C."/>
        </authorList>
    </citation>
    <scope>FUNCTION</scope>
    <scope>SUBUNIT</scope>
</reference>
<reference key="9">
    <citation type="journal article" date="2009" name="J. Biol. Chem.">
        <title>Regulation of signal transduction by enzymatically inactive antiviral RNA helicase proteins MDA5, RIG-I, and LGP2.</title>
        <authorList>
            <person name="Bamming D."/>
            <person name="Horvath C.M."/>
        </authorList>
    </citation>
    <scope>FUNCTION</scope>
    <scope>CATALYTIC ACTIVITY</scope>
    <scope>MUTAGENESIS OF LYS-30; 131-ASP--HIS-134; 167-THR--SER-169; 373-PHE--THR-376; 438-THR--GLU-442 AND 467-GLN--ARG-471</scope>
</reference>
<reference key="10">
    <citation type="journal article" date="2009" name="J. Virol.">
        <title>A shared interface mediates paramyxovirus interference with antiviral RNA helicases MDA5 and LGP2.</title>
        <authorList>
            <person name="Parisien J.P."/>
            <person name="Bamming D."/>
            <person name="Komuro A."/>
            <person name="Ramachandran A."/>
            <person name="Rodriguez J.J."/>
            <person name="Barber G."/>
            <person name="Wojahn R.D."/>
            <person name="Horvath C.M."/>
        </authorList>
    </citation>
    <scope>CATALYTIC ACTIVITY</scope>
    <scope>INTERACTION WITH PARAMYXOVIRUSES NON-STRUCTURAL PROTEIN V (MICROBIAL INFECTION)</scope>
</reference>
<reference key="11">
    <citation type="journal article" date="2011" name="Immunity">
        <title>Immune signaling by RIG-I-like receptors.</title>
        <authorList>
            <person name="Loo Y.M."/>
            <person name="Gale M. Jr."/>
        </authorList>
    </citation>
    <scope>REVIEW ON FUNCTION</scope>
</reference>
<reference key="12">
    <citation type="journal article" date="2011" name="J. Immunol.">
        <title>RIG-I/MDA5/MAVS are required to signal a protective IFN response in rotavirus-infected intestinal epithelium.</title>
        <authorList>
            <person name="Broquet A.H."/>
            <person name="Hirata Y."/>
            <person name="McAllister C.S."/>
            <person name="Kagnoff M.F."/>
        </authorList>
    </citation>
    <scope>FUNCTION</scope>
</reference>
<reference key="13">
    <citation type="journal article" date="2011" name="J. Virol.">
        <title>Ambivalent role of the innate immune response in rabies virus pathogenesis.</title>
        <authorList>
            <person name="Chopy D."/>
            <person name="Pothlichet J."/>
            <person name="Lafage M."/>
            <person name="Megret F."/>
            <person name="Fiette L."/>
            <person name="Si-Tahar M."/>
            <person name="Lafon M."/>
        </authorList>
    </citation>
    <scope>FUNCTION</scope>
</reference>
<reference key="14">
    <citation type="journal article" date="2011" name="Mol. Cell. Biol.">
        <title>DDX60, a DEXD/H box helicase, is a novel antiviral factor promoting RIG-I-like receptor-mediated signaling.</title>
        <authorList>
            <person name="Miyashita M."/>
            <person name="Oshiumi H."/>
            <person name="Matsumoto M."/>
            <person name="Seya T."/>
        </authorList>
    </citation>
    <scope>INTERACTION WITH DDX60</scope>
</reference>
<reference key="15">
    <citation type="journal article" date="2012" name="Eur. J. Cell Biol.">
        <title>Regulation of RLR-mediated innate immune signaling--it is all about keeping the balance.</title>
        <authorList>
            <person name="Eisenaecher K."/>
            <person name="Krug A."/>
        </authorList>
    </citation>
    <scope>REVIEW ON FUNCTION</scope>
</reference>
<reference key="16">
    <citation type="journal article" date="2012" name="Eur. J. Cell Biol.">
        <title>Sensing of viral nucleic acids by RIG-I: from translocation to translation.</title>
        <authorList>
            <person name="Schmidt A."/>
            <person name="Rothenfusser S."/>
            <person name="Hopfner K.P."/>
        </authorList>
    </citation>
    <scope>REVIEW ON FUNCTION</scope>
</reference>
<reference key="17">
    <citation type="journal article" date="2013" name="FEBS Lett.">
        <title>A role for the Ankyrin repeat containing protein Ankrd17 in Nod1- and Nod2-mediated inflammatory responses.</title>
        <authorList>
            <person name="Menning M."/>
            <person name="Kufer T.A."/>
        </authorList>
    </citation>
    <scope>INTERACTION WITH ANKRD17</scope>
</reference>
<reference key="18">
    <citation type="journal article" date="2021" name="Cell Rep.">
        <title>MDA5 Governs the Innate Immune Response to SARS-CoV-2 in Lung Epithelial Cells.</title>
        <authorList>
            <person name="Yin X."/>
            <person name="Riva L."/>
            <person name="Pu Y."/>
            <person name="Martin-Sancho L."/>
            <person name="Kanamune J."/>
            <person name="Yamamoto Y."/>
            <person name="Sakai K."/>
            <person name="Gotoh S."/>
            <person name="Miorin L."/>
            <person name="De Jesus P.D."/>
            <person name="Yang C.C."/>
            <person name="Herbert K.M."/>
            <person name="Yoh S."/>
            <person name="Hultquist J.F."/>
            <person name="Garcia-Sastre A."/>
            <person name="Chanda S.K."/>
        </authorList>
    </citation>
    <scope>FUNCTION</scope>
</reference>
<reference key="19">
    <citation type="journal article" date="2009" name="J. Biol. Chem.">
        <title>The RIG-I-like receptor LGP2 recognizes the termini of double-stranded RNA.</title>
        <authorList>
            <person name="Li X."/>
            <person name="Ranjith-Kumar C.T."/>
            <person name="Brooks M.T."/>
            <person name="Dharmaiah S."/>
            <person name="Herr A.B."/>
            <person name="Kao C."/>
            <person name="Li P."/>
        </authorList>
    </citation>
    <scope>X-RAY CRYSTALLOGRAPHY (2.0 ANGSTROMS) OF 541-678 IN COMPLEX WITH RNA</scope>
    <scope>FUNCTION</scope>
    <scope>SUBUNIT</scope>
    <scope>MUTAGENESIS OF LYS-634 AND LYS-651</scope>
    <scope>ZINC-BINDING SITES</scope>
</reference>
<reference key="20">
    <citation type="journal article" date="2009" name="J. Biol. Chem.">
        <title>Solution structures of cytosolic RNA sensor MDA5 and LGP2 C-terminal domains: identification of the RNA recognition loop in RIG-I-like receptors.</title>
        <authorList>
            <person name="Takahasi K."/>
            <person name="Kumeta H."/>
            <person name="Tsuduki N."/>
            <person name="Narita R."/>
            <person name="Shigemoto T."/>
            <person name="Hirai R."/>
            <person name="Yoneyama M."/>
            <person name="Horiuchi M."/>
            <person name="Ogura K."/>
            <person name="Fujita T."/>
            <person name="Inagaki F."/>
        </authorList>
    </citation>
    <scope>STRUCTURE BY NMR OF 546-678</scope>
    <scope>FUNCTION</scope>
    <scope>SUBCELLULAR LOCATION</scope>
</reference>
<reference key="21">
    <citation type="journal article" date="2009" name="Nucleic Acids Res.">
        <title>The regulatory domain of the RIG-I family ATPase LGP2 senses double-stranded RNA.</title>
        <authorList>
            <person name="Pippig D.A."/>
            <person name="Hellmuth J.C."/>
            <person name="Cui S."/>
            <person name="Kirchhofer A."/>
            <person name="Lammens K."/>
            <person name="Lammens A."/>
            <person name="Schmidt A."/>
            <person name="Rothenfusser S."/>
            <person name="Hopfner K.-P."/>
        </authorList>
    </citation>
    <scope>X-RAY CRYSTALLOGRAPHY (2.6 ANGSTROMS) OF 537-678</scope>
    <scope>FUNCTION</scope>
    <scope>SUBUNIT</scope>
    <scope>MUTAGENESIS OF LYS-634</scope>
    <scope>ZINC-BINDING SITES</scope>
</reference>
<reference key="22">
    <citation type="journal article" date="2019" name="Am. J. Hum. Genet.">
        <title>Paralog studies augment gene discovery: DDX and DHX genes.</title>
        <authorList>
            <consortium name="University of Washington Center for Mendelian Genomics, Baylor-Hopkins Center for Mendelian Genomics, Telethon Undiagnosed Diseases Program"/>
            <person name="Paine I."/>
            <person name="Posey J.E."/>
            <person name="Grochowski C.M."/>
            <person name="Jhangiani S.N."/>
            <person name="Rosenheck S."/>
            <person name="Kleyner R."/>
            <person name="Marmorale T."/>
            <person name="Yoon M."/>
            <person name="Wang K."/>
            <person name="Robison R."/>
            <person name="Cappuccio G."/>
            <person name="Pinelli M."/>
            <person name="Magli A."/>
            <person name="Coban Akdemir Z."/>
            <person name="Hui J."/>
            <person name="Yeung W.L."/>
            <person name="Wong B.K.Y."/>
            <person name="Ortega L."/>
            <person name="Bekheirnia M.R."/>
            <person name="Bierhals T."/>
            <person name="Hempel M."/>
            <person name="Johannsen J."/>
            <person name="Santer R."/>
            <person name="Aktas D."/>
            <person name="Alikasifoglu M."/>
            <person name="Bozdogan S."/>
            <person name="Aydin H."/>
            <person name="Karaca E."/>
            <person name="Bayram Y."/>
            <person name="Ityel H."/>
            <person name="Dorschner M."/>
            <person name="White J.J."/>
            <person name="Wilichowski E."/>
            <person name="Wortmann S.B."/>
            <person name="Casella E.B."/>
            <person name="Kitajima J.P."/>
            <person name="Kok F."/>
            <person name="Monteiro F."/>
            <person name="Muzny D.M."/>
            <person name="Bamshad M."/>
            <person name="Gibbs R.A."/>
            <person name="Sutton V.R."/>
            <person name="Van Esch H."/>
            <person name="Brunetti-Pierri N."/>
            <person name="Hildebrandt F."/>
            <person name="Brautbar A."/>
            <person name="Van den Veyver I.B."/>
            <person name="Glass I."/>
            <person name="Lessel D."/>
            <person name="Lyon G.J."/>
            <person name="Lupski J.R."/>
        </authorList>
    </citation>
    <scope>VARIANT CYS-8</scope>
    <scope>TISSUE SPECIFICITY</scope>
</reference>
<keyword id="KW-0002">3D-structure</keyword>
<keyword id="KW-0051">Antiviral defense</keyword>
<keyword id="KW-0067">ATP-binding</keyword>
<keyword id="KW-0175">Coiled coil</keyword>
<keyword id="KW-0963">Cytoplasm</keyword>
<keyword id="KW-0347">Helicase</keyword>
<keyword id="KW-0945">Host-virus interaction</keyword>
<keyword id="KW-0378">Hydrolase</keyword>
<keyword id="KW-0391">Immunity</keyword>
<keyword id="KW-0399">Innate immunity</keyword>
<keyword id="KW-0479">Metal-binding</keyword>
<keyword id="KW-0547">Nucleotide-binding</keyword>
<keyword id="KW-1267">Proteomics identification</keyword>
<keyword id="KW-1185">Reference proteome</keyword>
<keyword id="KW-0694">RNA-binding</keyword>
<keyword id="KW-0862">Zinc</keyword>
<gene>
    <name evidence="22" type="primary">DHX58</name>
    <name type="synonym">D11LGP2E</name>
    <name type="synonym">LGP2</name>
</gene>